<keyword id="KW-0067">ATP-binding</keyword>
<keyword id="KW-0963">Cytoplasm</keyword>
<keyword id="KW-0460">Magnesium</keyword>
<keyword id="KW-0479">Metal-binding</keyword>
<keyword id="KW-0547">Nucleotide-binding</keyword>
<keyword id="KW-0554">One-carbon metabolism</keyword>
<keyword id="KW-0630">Potassium</keyword>
<keyword id="KW-0808">Transferase</keyword>
<comment type="function">
    <text evidence="1">Catalyzes the formation of S-adenosylmethionine (AdoMet) from methionine and ATP. The overall synthetic reaction is composed of two sequential steps, AdoMet formation and the subsequent tripolyphosphate hydrolysis which occurs prior to release of AdoMet from the enzyme.</text>
</comment>
<comment type="catalytic activity">
    <reaction evidence="1">
        <text>L-methionine + ATP + H2O = S-adenosyl-L-methionine + phosphate + diphosphate</text>
        <dbReference type="Rhea" id="RHEA:21080"/>
        <dbReference type="ChEBI" id="CHEBI:15377"/>
        <dbReference type="ChEBI" id="CHEBI:30616"/>
        <dbReference type="ChEBI" id="CHEBI:33019"/>
        <dbReference type="ChEBI" id="CHEBI:43474"/>
        <dbReference type="ChEBI" id="CHEBI:57844"/>
        <dbReference type="ChEBI" id="CHEBI:59789"/>
        <dbReference type="EC" id="2.5.1.6"/>
    </reaction>
</comment>
<comment type="cofactor">
    <cofactor evidence="1">
        <name>Mg(2+)</name>
        <dbReference type="ChEBI" id="CHEBI:18420"/>
    </cofactor>
    <text evidence="1">Binds 2 divalent ions per subunit.</text>
</comment>
<comment type="cofactor">
    <cofactor evidence="1">
        <name>K(+)</name>
        <dbReference type="ChEBI" id="CHEBI:29103"/>
    </cofactor>
    <text evidence="1">Binds 1 potassium ion per subunit.</text>
</comment>
<comment type="pathway">
    <text evidence="1">Amino-acid biosynthesis; S-adenosyl-L-methionine biosynthesis; S-adenosyl-L-methionine from L-methionine: step 1/1.</text>
</comment>
<comment type="subunit">
    <text evidence="1">Homotetramer; dimer of dimers.</text>
</comment>
<comment type="subcellular location">
    <subcellularLocation>
        <location evidence="1">Cytoplasm</location>
    </subcellularLocation>
</comment>
<comment type="similarity">
    <text evidence="1">Belongs to the AdoMet synthase family.</text>
</comment>
<protein>
    <recommendedName>
        <fullName evidence="1">S-adenosylmethionine synthase</fullName>
        <shortName evidence="1">AdoMet synthase</shortName>
        <ecNumber evidence="1">2.5.1.6</ecNumber>
    </recommendedName>
    <alternativeName>
        <fullName evidence="1">MAT</fullName>
    </alternativeName>
    <alternativeName>
        <fullName evidence="1">Methionine adenosyltransferase</fullName>
    </alternativeName>
</protein>
<reference key="1">
    <citation type="journal article" date="2007" name="Genome Biol.">
        <title>Characterization and modeling of the Haemophilus influenzae core and supragenomes based on the complete genomic sequences of Rd and 12 clinical nontypeable strains.</title>
        <authorList>
            <person name="Hogg J.S."/>
            <person name="Hu F.Z."/>
            <person name="Janto B."/>
            <person name="Boissy R."/>
            <person name="Hayes J."/>
            <person name="Keefe R."/>
            <person name="Post J.C."/>
            <person name="Ehrlich G.D."/>
        </authorList>
    </citation>
    <scope>NUCLEOTIDE SEQUENCE [LARGE SCALE GENOMIC DNA]</scope>
    <source>
        <strain>PittGG</strain>
    </source>
</reference>
<accession>A5UIU0</accession>
<organism>
    <name type="scientific">Haemophilus influenzae (strain PittGG)</name>
    <dbReference type="NCBI Taxonomy" id="374931"/>
    <lineage>
        <taxon>Bacteria</taxon>
        <taxon>Pseudomonadati</taxon>
        <taxon>Pseudomonadota</taxon>
        <taxon>Gammaproteobacteria</taxon>
        <taxon>Pasteurellales</taxon>
        <taxon>Pasteurellaceae</taxon>
        <taxon>Haemophilus</taxon>
    </lineage>
</organism>
<evidence type="ECO:0000255" key="1">
    <source>
        <dbReference type="HAMAP-Rule" id="MF_00086"/>
    </source>
</evidence>
<name>METK_HAEIG</name>
<sequence>MSSYLFTSESVSEGHPDKIADQISDAVLDEILKQDPKARVACETYVKTGMALVGGEITTSAWVDIENLTRKVICDIGYEHSEMGFDGHSCAVLNAIGKQSADINQGVDRENPLDQGAGDQGIMFGYATNETDVLMPAAITYAHRLMEKQAEVRKSGKLAWLRPDAKSQVTLKYEDNKIVGVDAVVLSTQHSEEVSQKDLHEGVMEEIIKPVLPSEWLSKETKFFINPTGRFVIGGPMGDCGLTGRKIIVDTYGGAARHGGGAFSGKDPSKVDRSAAYAARYVAKNIVAAGLADRCEIQLSYAIGVADPTSIMVETFGTGKVANELLVSLVREFFDLRPYGLIKMLDLIQPIYRETAAYGHFGREQFPWEKVDRAEDLRVAAGLK</sequence>
<feature type="chain" id="PRO_1000007942" description="S-adenosylmethionine synthase">
    <location>
        <begin position="1"/>
        <end position="384"/>
    </location>
</feature>
<feature type="region of interest" description="Flexible loop" evidence="1">
    <location>
        <begin position="99"/>
        <end position="109"/>
    </location>
</feature>
<feature type="binding site" description="in other chain" evidence="1">
    <location>
        <position position="15"/>
    </location>
    <ligand>
        <name>ATP</name>
        <dbReference type="ChEBI" id="CHEBI:30616"/>
        <note>ligand shared between two neighboring subunits</note>
    </ligand>
</feature>
<feature type="binding site" evidence="1">
    <location>
        <position position="17"/>
    </location>
    <ligand>
        <name>Mg(2+)</name>
        <dbReference type="ChEBI" id="CHEBI:18420"/>
    </ligand>
</feature>
<feature type="binding site" evidence="1">
    <location>
        <position position="43"/>
    </location>
    <ligand>
        <name>K(+)</name>
        <dbReference type="ChEBI" id="CHEBI:29103"/>
    </ligand>
</feature>
<feature type="binding site" description="in other chain" evidence="1">
    <location>
        <position position="56"/>
    </location>
    <ligand>
        <name>L-methionine</name>
        <dbReference type="ChEBI" id="CHEBI:57844"/>
        <note>ligand shared between two neighboring subunits</note>
    </ligand>
</feature>
<feature type="binding site" description="in other chain" evidence="1">
    <location>
        <position position="99"/>
    </location>
    <ligand>
        <name>L-methionine</name>
        <dbReference type="ChEBI" id="CHEBI:57844"/>
        <note>ligand shared between two neighboring subunits</note>
    </ligand>
</feature>
<feature type="binding site" description="in other chain" evidence="1">
    <location>
        <begin position="164"/>
        <end position="166"/>
    </location>
    <ligand>
        <name>ATP</name>
        <dbReference type="ChEBI" id="CHEBI:30616"/>
        <note>ligand shared between two neighboring subunits</note>
    </ligand>
</feature>
<feature type="binding site" description="in other chain" evidence="1">
    <location>
        <begin position="230"/>
        <end position="231"/>
    </location>
    <ligand>
        <name>ATP</name>
        <dbReference type="ChEBI" id="CHEBI:30616"/>
        <note>ligand shared between two neighboring subunits</note>
    </ligand>
</feature>
<feature type="binding site" evidence="1">
    <location>
        <position position="239"/>
    </location>
    <ligand>
        <name>ATP</name>
        <dbReference type="ChEBI" id="CHEBI:30616"/>
        <note>ligand shared between two neighboring subunits</note>
    </ligand>
</feature>
<feature type="binding site" evidence="1">
    <location>
        <position position="239"/>
    </location>
    <ligand>
        <name>L-methionine</name>
        <dbReference type="ChEBI" id="CHEBI:57844"/>
        <note>ligand shared between two neighboring subunits</note>
    </ligand>
</feature>
<feature type="binding site" description="in other chain" evidence="1">
    <location>
        <begin position="245"/>
        <end position="246"/>
    </location>
    <ligand>
        <name>ATP</name>
        <dbReference type="ChEBI" id="CHEBI:30616"/>
        <note>ligand shared between two neighboring subunits</note>
    </ligand>
</feature>
<feature type="binding site" evidence="1">
    <location>
        <position position="262"/>
    </location>
    <ligand>
        <name>ATP</name>
        <dbReference type="ChEBI" id="CHEBI:30616"/>
        <note>ligand shared between two neighboring subunits</note>
    </ligand>
</feature>
<feature type="binding site" evidence="1">
    <location>
        <position position="266"/>
    </location>
    <ligand>
        <name>ATP</name>
        <dbReference type="ChEBI" id="CHEBI:30616"/>
        <note>ligand shared between two neighboring subunits</note>
    </ligand>
</feature>
<feature type="binding site" description="in other chain" evidence="1">
    <location>
        <position position="270"/>
    </location>
    <ligand>
        <name>L-methionine</name>
        <dbReference type="ChEBI" id="CHEBI:57844"/>
        <note>ligand shared between two neighboring subunits</note>
    </ligand>
</feature>
<dbReference type="EC" id="2.5.1.6" evidence="1"/>
<dbReference type="EMBL" id="CP000672">
    <property type="protein sequence ID" value="ABR00696.1"/>
    <property type="molecule type" value="Genomic_DNA"/>
</dbReference>
<dbReference type="SMR" id="A5UIU0"/>
<dbReference type="KEGG" id="hiq:CGSHiGG_09560"/>
<dbReference type="HOGENOM" id="CLU_041802_1_1_6"/>
<dbReference type="UniPathway" id="UPA00315">
    <property type="reaction ID" value="UER00080"/>
</dbReference>
<dbReference type="Proteomes" id="UP000001990">
    <property type="component" value="Chromosome"/>
</dbReference>
<dbReference type="GO" id="GO:0005737">
    <property type="term" value="C:cytoplasm"/>
    <property type="evidence" value="ECO:0007669"/>
    <property type="project" value="UniProtKB-SubCell"/>
</dbReference>
<dbReference type="GO" id="GO:0005524">
    <property type="term" value="F:ATP binding"/>
    <property type="evidence" value="ECO:0007669"/>
    <property type="project" value="UniProtKB-UniRule"/>
</dbReference>
<dbReference type="GO" id="GO:0000287">
    <property type="term" value="F:magnesium ion binding"/>
    <property type="evidence" value="ECO:0007669"/>
    <property type="project" value="UniProtKB-UniRule"/>
</dbReference>
<dbReference type="GO" id="GO:0004478">
    <property type="term" value="F:methionine adenosyltransferase activity"/>
    <property type="evidence" value="ECO:0007669"/>
    <property type="project" value="UniProtKB-UniRule"/>
</dbReference>
<dbReference type="GO" id="GO:0006730">
    <property type="term" value="P:one-carbon metabolic process"/>
    <property type="evidence" value="ECO:0007669"/>
    <property type="project" value="UniProtKB-KW"/>
</dbReference>
<dbReference type="GO" id="GO:0006556">
    <property type="term" value="P:S-adenosylmethionine biosynthetic process"/>
    <property type="evidence" value="ECO:0007669"/>
    <property type="project" value="UniProtKB-UniRule"/>
</dbReference>
<dbReference type="CDD" id="cd18079">
    <property type="entry name" value="S-AdoMet_synt"/>
    <property type="match status" value="1"/>
</dbReference>
<dbReference type="FunFam" id="3.30.300.10:FF:000003">
    <property type="entry name" value="S-adenosylmethionine synthase"/>
    <property type="match status" value="1"/>
</dbReference>
<dbReference type="Gene3D" id="3.30.300.10">
    <property type="match status" value="3"/>
</dbReference>
<dbReference type="HAMAP" id="MF_00086">
    <property type="entry name" value="S_AdoMet_synth1"/>
    <property type="match status" value="1"/>
</dbReference>
<dbReference type="InterPro" id="IPR022631">
    <property type="entry name" value="ADOMET_SYNTHASE_CS"/>
</dbReference>
<dbReference type="InterPro" id="IPR022630">
    <property type="entry name" value="S-AdoMet_synt_C"/>
</dbReference>
<dbReference type="InterPro" id="IPR022629">
    <property type="entry name" value="S-AdoMet_synt_central"/>
</dbReference>
<dbReference type="InterPro" id="IPR022628">
    <property type="entry name" value="S-AdoMet_synt_N"/>
</dbReference>
<dbReference type="InterPro" id="IPR002133">
    <property type="entry name" value="S-AdoMet_synthetase"/>
</dbReference>
<dbReference type="InterPro" id="IPR022636">
    <property type="entry name" value="S-AdoMet_synthetase_sfam"/>
</dbReference>
<dbReference type="NCBIfam" id="TIGR01034">
    <property type="entry name" value="metK"/>
    <property type="match status" value="1"/>
</dbReference>
<dbReference type="PANTHER" id="PTHR11964">
    <property type="entry name" value="S-ADENOSYLMETHIONINE SYNTHETASE"/>
    <property type="match status" value="1"/>
</dbReference>
<dbReference type="Pfam" id="PF02773">
    <property type="entry name" value="S-AdoMet_synt_C"/>
    <property type="match status" value="1"/>
</dbReference>
<dbReference type="Pfam" id="PF02772">
    <property type="entry name" value="S-AdoMet_synt_M"/>
    <property type="match status" value="1"/>
</dbReference>
<dbReference type="Pfam" id="PF00438">
    <property type="entry name" value="S-AdoMet_synt_N"/>
    <property type="match status" value="1"/>
</dbReference>
<dbReference type="PIRSF" id="PIRSF000497">
    <property type="entry name" value="MAT"/>
    <property type="match status" value="1"/>
</dbReference>
<dbReference type="SUPFAM" id="SSF55973">
    <property type="entry name" value="S-adenosylmethionine synthetase"/>
    <property type="match status" value="3"/>
</dbReference>
<dbReference type="PROSITE" id="PS00376">
    <property type="entry name" value="ADOMET_SYNTHASE_1"/>
    <property type="match status" value="1"/>
</dbReference>
<dbReference type="PROSITE" id="PS00377">
    <property type="entry name" value="ADOMET_SYNTHASE_2"/>
    <property type="match status" value="1"/>
</dbReference>
<gene>
    <name evidence="1" type="primary">metK</name>
    <name type="ordered locus">CGSHiGG_09560</name>
</gene>
<proteinExistence type="inferred from homology"/>